<evidence type="ECO:0000255" key="1">
    <source>
        <dbReference type="HAMAP-Rule" id="MF_00182"/>
    </source>
</evidence>
<feature type="chain" id="PRO_1000098457" description="Methionyl-tRNA formyltransferase">
    <location>
        <begin position="1"/>
        <end position="312"/>
    </location>
</feature>
<feature type="binding site" evidence="1">
    <location>
        <begin position="107"/>
        <end position="110"/>
    </location>
    <ligand>
        <name>(6S)-5,6,7,8-tetrahydrofolate</name>
        <dbReference type="ChEBI" id="CHEBI:57453"/>
    </ligand>
</feature>
<accession>B1GZ11</accession>
<protein>
    <recommendedName>
        <fullName evidence="1">Methionyl-tRNA formyltransferase</fullName>
        <ecNumber evidence="1">2.1.2.9</ecNumber>
    </recommendedName>
</protein>
<gene>
    <name evidence="1" type="primary">fmt</name>
    <name type="ordered locus">TGRD_010</name>
</gene>
<sequence length="312" mass="34892">MRILFFGTAFISETYLKELHKKCHEIFVVTTPDKPALRGQKLIYPAVKVYAVKNNISFIQPEKFTLDVIETIKNFAADTGVAVAYGKLIPKVVFDIPKYKTFNIHFSLLPKYKGAAPVQHALCRGETETGISSFYIEEGLDTGGIIIQEKLNISIKDNAETLLNKLILLGIDVMNKTLELFRCGKCDAASQTGDPSFAPSLKKIDGLVNWNKRAGEIYNQFRGLYLWPGIYSTISQGKLVGKRIKFREIEVFDSDSINKDSGIVYSAEKNRGFTVSCAVGRILVVKMQSENKPVVSAWDFIQGRQISAGDRF</sequence>
<name>FMT_ENDTX</name>
<dbReference type="EC" id="2.1.2.9" evidence="1"/>
<dbReference type="EMBL" id="AP009510">
    <property type="protein sequence ID" value="BAG13493.1"/>
    <property type="molecule type" value="Genomic_DNA"/>
</dbReference>
<dbReference type="RefSeq" id="WP_015423022.1">
    <property type="nucleotide sequence ID" value="NC_020419.1"/>
</dbReference>
<dbReference type="SMR" id="B1GZ11"/>
<dbReference type="STRING" id="471821.TGRD_010"/>
<dbReference type="KEGG" id="rsd:TGRD_010"/>
<dbReference type="PATRIC" id="fig|471821.5.peg.20"/>
<dbReference type="HOGENOM" id="CLU_033347_1_1_0"/>
<dbReference type="Proteomes" id="UP000001691">
    <property type="component" value="Chromosome"/>
</dbReference>
<dbReference type="GO" id="GO:0005829">
    <property type="term" value="C:cytosol"/>
    <property type="evidence" value="ECO:0007669"/>
    <property type="project" value="TreeGrafter"/>
</dbReference>
<dbReference type="GO" id="GO:0004479">
    <property type="term" value="F:methionyl-tRNA formyltransferase activity"/>
    <property type="evidence" value="ECO:0007669"/>
    <property type="project" value="UniProtKB-UniRule"/>
</dbReference>
<dbReference type="CDD" id="cd08646">
    <property type="entry name" value="FMT_core_Met-tRNA-FMT_N"/>
    <property type="match status" value="1"/>
</dbReference>
<dbReference type="CDD" id="cd08704">
    <property type="entry name" value="Met_tRNA_FMT_C"/>
    <property type="match status" value="1"/>
</dbReference>
<dbReference type="Gene3D" id="3.40.50.12230">
    <property type="match status" value="1"/>
</dbReference>
<dbReference type="HAMAP" id="MF_00182">
    <property type="entry name" value="Formyl_trans"/>
    <property type="match status" value="1"/>
</dbReference>
<dbReference type="InterPro" id="IPR005794">
    <property type="entry name" value="Fmt"/>
</dbReference>
<dbReference type="InterPro" id="IPR005793">
    <property type="entry name" value="Formyl_trans_C"/>
</dbReference>
<dbReference type="InterPro" id="IPR002376">
    <property type="entry name" value="Formyl_transf_N"/>
</dbReference>
<dbReference type="InterPro" id="IPR036477">
    <property type="entry name" value="Formyl_transf_N_sf"/>
</dbReference>
<dbReference type="InterPro" id="IPR011034">
    <property type="entry name" value="Formyl_transferase-like_C_sf"/>
</dbReference>
<dbReference type="InterPro" id="IPR044135">
    <property type="entry name" value="Met-tRNA-FMT_C"/>
</dbReference>
<dbReference type="InterPro" id="IPR041711">
    <property type="entry name" value="Met-tRNA-FMT_N"/>
</dbReference>
<dbReference type="NCBIfam" id="TIGR00460">
    <property type="entry name" value="fmt"/>
    <property type="match status" value="1"/>
</dbReference>
<dbReference type="PANTHER" id="PTHR11138">
    <property type="entry name" value="METHIONYL-TRNA FORMYLTRANSFERASE"/>
    <property type="match status" value="1"/>
</dbReference>
<dbReference type="PANTHER" id="PTHR11138:SF5">
    <property type="entry name" value="METHIONYL-TRNA FORMYLTRANSFERASE, MITOCHONDRIAL"/>
    <property type="match status" value="1"/>
</dbReference>
<dbReference type="Pfam" id="PF02911">
    <property type="entry name" value="Formyl_trans_C"/>
    <property type="match status" value="1"/>
</dbReference>
<dbReference type="Pfam" id="PF00551">
    <property type="entry name" value="Formyl_trans_N"/>
    <property type="match status" value="1"/>
</dbReference>
<dbReference type="SUPFAM" id="SSF50486">
    <property type="entry name" value="FMT C-terminal domain-like"/>
    <property type="match status" value="1"/>
</dbReference>
<dbReference type="SUPFAM" id="SSF53328">
    <property type="entry name" value="Formyltransferase"/>
    <property type="match status" value="1"/>
</dbReference>
<keyword id="KW-0648">Protein biosynthesis</keyword>
<keyword id="KW-0808">Transferase</keyword>
<organism>
    <name type="scientific">Endomicrobium trichonymphae</name>
    <dbReference type="NCBI Taxonomy" id="1408204"/>
    <lineage>
        <taxon>Bacteria</taxon>
        <taxon>Pseudomonadati</taxon>
        <taxon>Elusimicrobiota</taxon>
        <taxon>Endomicrobiia</taxon>
        <taxon>Endomicrobiales</taxon>
        <taxon>Endomicrobiaceae</taxon>
        <taxon>Candidatus Endomicrobiellum</taxon>
    </lineage>
</organism>
<comment type="function">
    <text evidence="1">Attaches a formyl group to the free amino group of methionyl-tRNA(fMet). The formyl group appears to play a dual role in the initiator identity of N-formylmethionyl-tRNA by promoting its recognition by IF2 and preventing the misappropriation of this tRNA by the elongation apparatus.</text>
</comment>
<comment type="catalytic activity">
    <reaction evidence="1">
        <text>L-methionyl-tRNA(fMet) + (6R)-10-formyltetrahydrofolate = N-formyl-L-methionyl-tRNA(fMet) + (6S)-5,6,7,8-tetrahydrofolate + H(+)</text>
        <dbReference type="Rhea" id="RHEA:24380"/>
        <dbReference type="Rhea" id="RHEA-COMP:9952"/>
        <dbReference type="Rhea" id="RHEA-COMP:9953"/>
        <dbReference type="ChEBI" id="CHEBI:15378"/>
        <dbReference type="ChEBI" id="CHEBI:57453"/>
        <dbReference type="ChEBI" id="CHEBI:78530"/>
        <dbReference type="ChEBI" id="CHEBI:78844"/>
        <dbReference type="ChEBI" id="CHEBI:195366"/>
        <dbReference type="EC" id="2.1.2.9"/>
    </reaction>
</comment>
<comment type="similarity">
    <text evidence="1">Belongs to the Fmt family.</text>
</comment>
<reference key="1">
    <citation type="journal article" date="2008" name="Proc. Natl. Acad. Sci. U.S.A.">
        <title>Complete genome of the uncultured termite group 1 bacteria in a single host protist cell.</title>
        <authorList>
            <person name="Hongoh Y."/>
            <person name="Sharma V.K."/>
            <person name="Prakash T."/>
            <person name="Noda S."/>
            <person name="Taylor T.D."/>
            <person name="Kudo T."/>
            <person name="Sakaki Y."/>
            <person name="Toyoda A."/>
            <person name="Hattori M."/>
            <person name="Ohkuma M."/>
        </authorList>
    </citation>
    <scope>NUCLEOTIDE SEQUENCE [LARGE SCALE GENOMIC DNA]</scope>
</reference>
<proteinExistence type="inferred from homology"/>